<organism>
    <name type="scientific">Aspergillus flavus (strain ATCC 200026 / FGSC A1120 / IAM 13836 / NRRL 3357 / JCM 12722 / SRRC 167)</name>
    <dbReference type="NCBI Taxonomy" id="332952"/>
    <lineage>
        <taxon>Eukaryota</taxon>
        <taxon>Fungi</taxon>
        <taxon>Dikarya</taxon>
        <taxon>Ascomycota</taxon>
        <taxon>Pezizomycotina</taxon>
        <taxon>Eurotiomycetes</taxon>
        <taxon>Eurotiomycetidae</taxon>
        <taxon>Eurotiales</taxon>
        <taxon>Aspergillaceae</taxon>
        <taxon>Aspergillus</taxon>
        <taxon>Aspergillus subgen. Circumdati</taxon>
    </lineage>
</organism>
<evidence type="ECO:0000250" key="1"/>
<evidence type="ECO:0000255" key="2"/>
<evidence type="ECO:0000305" key="3"/>
<feature type="signal peptide" evidence="2">
    <location>
        <begin position="1"/>
        <end position="17"/>
    </location>
</feature>
<feature type="chain" id="PRO_0000393540" description="Probable 1,4-beta-D-glucan cellobiohydrolase A">
    <location>
        <begin position="18"/>
        <end position="455"/>
    </location>
</feature>
<feature type="active site" description="Nucleophile" evidence="1">
    <location>
        <position position="227"/>
    </location>
</feature>
<feature type="active site" description="Proton donor" evidence="1">
    <location>
        <position position="232"/>
    </location>
</feature>
<feature type="glycosylation site" description="N-linked (GlcNAc...) asparagine" evidence="2">
    <location>
        <position position="81"/>
    </location>
</feature>
<feature type="glycosylation site" description="N-linked (GlcNAc...) asparagine" evidence="2">
    <location>
        <position position="285"/>
    </location>
</feature>
<reference key="1">
    <citation type="journal article" date="2015" name="Genome Announc.">
        <title>Genome sequence of Aspergillus flavus NRRL 3357, a strain that causes aflatoxin contamination of food and feed.</title>
        <authorList>
            <person name="Nierman W.C."/>
            <person name="Yu J."/>
            <person name="Fedorova-Abrams N.D."/>
            <person name="Losada L."/>
            <person name="Cleveland T.E."/>
            <person name="Bhatnagar D."/>
            <person name="Bennett J.W."/>
            <person name="Dean R."/>
            <person name="Payne G.A."/>
        </authorList>
    </citation>
    <scope>NUCLEOTIDE SEQUENCE [LARGE SCALE GENOMIC DNA]</scope>
    <source>
        <strain>ATCC 200026 / FGSC A1120 / IAM 13836 / NRRL 3357 / JCM 12722 / SRRC 167</strain>
    </source>
</reference>
<gene>
    <name type="primary">cbhA</name>
    <name type="synonym">celD</name>
    <name type="ORF">AFLA_021870</name>
</gene>
<sequence length="455" mass="48135">MHQRALLFSAFWTAVQAQQAGTLTAETHPSLTWQKCAAGGTCTEQKGSVVLDSNWRWLHSVDGSTNCYTGNTWDATLCPDNESCASNCALDGADYEGTYGVTTSGDALTLQFVTGANIGSRLYLMADDDESYQTFNLLNNEFTFDVDASKLPCGLNGAVYFVSMDADGGVAKYSTNKAGAKYGTGYCDSQCPRDLKFINGQANVEGWEPSDSDKNAGVGGHGSCCPEMDIWEANSISTAYTPHPCDDTAQTMCEGDTCGGTYSSERYAGTCDPDGCDFNAYRMGNESFYGPSKLVDSSSPVTVVTQFITADGTDSGALSEIKRFYVQGGKVIANAASNVDGVTGNSITADFCTAQKKAFGDDDIFAQHGGLQGMGNALSSMVLTLSIWDDHHSSMMWLDSSYPEDADATAPGVARGTCEPHAGDPEKVESQSGSATVTYSNIKYGPIGSTFDAPA</sequence>
<protein>
    <recommendedName>
        <fullName>Probable 1,4-beta-D-glucan cellobiohydrolase A</fullName>
        <ecNumber>3.2.1.91</ecNumber>
    </recommendedName>
    <alternativeName>
        <fullName>Beta-glucancellobiohydrolase A</fullName>
    </alternativeName>
    <alternativeName>
        <fullName>Cellobiohydrolase D</fullName>
    </alternativeName>
    <alternativeName>
        <fullName>Exocellobiohydrolase A</fullName>
    </alternativeName>
    <alternativeName>
        <fullName>Exoglucanase A</fullName>
    </alternativeName>
</protein>
<keyword id="KW-0119">Carbohydrate metabolism</keyword>
<keyword id="KW-0136">Cellulose degradation</keyword>
<keyword id="KW-0325">Glycoprotein</keyword>
<keyword id="KW-0326">Glycosidase</keyword>
<keyword id="KW-0378">Hydrolase</keyword>
<keyword id="KW-0624">Polysaccharide degradation</keyword>
<keyword id="KW-0964">Secreted</keyword>
<keyword id="KW-0732">Signal</keyword>
<proteinExistence type="inferred from homology"/>
<comment type="function">
    <text evidence="1">The biological conversion of cellulose to glucose generally requires three types of hydrolytic enzymes: (1) Endoglucanases which cut internal beta-1,4-glucosidic bonds; (2) Exocellobiohydrolases that cut the disaccharide cellobiose from the non-reducing end of the cellulose polymer chain; (3) Beta-1,4-glucosidases which hydrolyze the cellobiose and other short cello-oligosaccharides to glucose.</text>
</comment>
<comment type="catalytic activity">
    <reaction>
        <text>Hydrolysis of (1-&gt;4)-beta-D-glucosidic linkages in cellulose and cellotetraose, releasing cellobiose from the non-reducing ends of the chains.</text>
        <dbReference type="EC" id="3.2.1.91"/>
    </reaction>
</comment>
<comment type="subcellular location">
    <subcellularLocation>
        <location evidence="3">Secreted</location>
    </subcellularLocation>
</comment>
<comment type="similarity">
    <text evidence="3">Belongs to the glycosyl hydrolase 7 (cellulase C) family.</text>
</comment>
<dbReference type="EC" id="3.2.1.91"/>
<dbReference type="EMBL" id="EQ963474">
    <property type="protein sequence ID" value="EED54935.1"/>
    <property type="molecule type" value="Genomic_DNA"/>
</dbReference>
<dbReference type="RefSeq" id="XP_002376207.1">
    <property type="nucleotide sequence ID" value="XM_002376166.1"/>
</dbReference>
<dbReference type="SMR" id="B8N7G5"/>
<dbReference type="STRING" id="332952.B8N7G5"/>
<dbReference type="GlyCosmos" id="B8N7G5">
    <property type="glycosylation" value="2 sites, No reported glycans"/>
</dbReference>
<dbReference type="EnsemblFungi" id="EED54935">
    <property type="protein sequence ID" value="EED54935"/>
    <property type="gene ID" value="AFLA_021870"/>
</dbReference>
<dbReference type="VEuPathDB" id="FungiDB:AFLA_002665"/>
<dbReference type="eggNOG" id="ENOG502QPHV">
    <property type="taxonomic scope" value="Eukaryota"/>
</dbReference>
<dbReference type="HOGENOM" id="CLU_020817_3_2_1"/>
<dbReference type="OMA" id="NTYQMFQ"/>
<dbReference type="GO" id="GO:0005576">
    <property type="term" value="C:extracellular region"/>
    <property type="evidence" value="ECO:0007669"/>
    <property type="project" value="UniProtKB-SubCell"/>
</dbReference>
<dbReference type="GO" id="GO:0016162">
    <property type="term" value="F:cellulose 1,4-beta-cellobiosidase activity"/>
    <property type="evidence" value="ECO:0007669"/>
    <property type="project" value="UniProtKB-EC"/>
</dbReference>
<dbReference type="GO" id="GO:0030245">
    <property type="term" value="P:cellulose catabolic process"/>
    <property type="evidence" value="ECO:0007669"/>
    <property type="project" value="UniProtKB-KW"/>
</dbReference>
<dbReference type="CDD" id="cd07999">
    <property type="entry name" value="GH7_CBH_EG"/>
    <property type="match status" value="1"/>
</dbReference>
<dbReference type="FunFam" id="2.70.100.10:FF:000001">
    <property type="entry name" value="Glucanase"/>
    <property type="match status" value="1"/>
</dbReference>
<dbReference type="Gene3D" id="2.70.100.10">
    <property type="entry name" value="Glycoside hydrolase, family 7, domain"/>
    <property type="match status" value="1"/>
</dbReference>
<dbReference type="InterPro" id="IPR013320">
    <property type="entry name" value="ConA-like_dom_sf"/>
</dbReference>
<dbReference type="InterPro" id="IPR001722">
    <property type="entry name" value="Glyco_hydro_7"/>
</dbReference>
<dbReference type="InterPro" id="IPR037019">
    <property type="entry name" value="Glyco_hydro_7_sf"/>
</dbReference>
<dbReference type="PANTHER" id="PTHR33753:SF6">
    <property type="entry name" value="1,4-BETA-D-GLUCAN CELLOBIOHYDROLASE A-RELATED"/>
    <property type="match status" value="1"/>
</dbReference>
<dbReference type="PANTHER" id="PTHR33753">
    <property type="entry name" value="1,4-BETA-D-GLUCAN CELLOBIOHYDROLASE B"/>
    <property type="match status" value="1"/>
</dbReference>
<dbReference type="Pfam" id="PF00840">
    <property type="entry name" value="Glyco_hydro_7"/>
    <property type="match status" value="1"/>
</dbReference>
<dbReference type="PRINTS" id="PR00734">
    <property type="entry name" value="GLHYDRLASE7"/>
</dbReference>
<dbReference type="SUPFAM" id="SSF49899">
    <property type="entry name" value="Concanavalin A-like lectins/glucanases"/>
    <property type="match status" value="1"/>
</dbReference>
<name>CBHA_ASPFN</name>
<accession>B8N7G5</accession>